<keyword id="KW-0963">Cytoplasm</keyword>
<keyword id="KW-0903">Direct protein sequencing</keyword>
<keyword id="KW-0349">Heme</keyword>
<keyword id="KW-0408">Iron</keyword>
<keyword id="KW-0479">Metal-binding</keyword>
<keyword id="KW-0514">Muscle protein</keyword>
<keyword id="KW-0560">Oxidoreductase</keyword>
<keyword id="KW-0561">Oxygen transport</keyword>
<keyword id="KW-0597">Phosphoprotein</keyword>
<keyword id="KW-0813">Transport</keyword>
<organism>
    <name type="scientific">Didelphis virginiana</name>
    <name type="common">North American opossum</name>
    <name type="synonym">Didelphis marsupialis virginiana</name>
    <dbReference type="NCBI Taxonomy" id="9267"/>
    <lineage>
        <taxon>Eukaryota</taxon>
        <taxon>Metazoa</taxon>
        <taxon>Chordata</taxon>
        <taxon>Craniata</taxon>
        <taxon>Vertebrata</taxon>
        <taxon>Euteleostomi</taxon>
        <taxon>Mammalia</taxon>
        <taxon>Metatheria</taxon>
        <taxon>Didelphimorphia</taxon>
        <taxon>Didelphidae</taxon>
        <taxon>Didelphis</taxon>
    </lineage>
</organism>
<feature type="initiator methionine" description="Removed" evidence="8">
    <location>
        <position position="1"/>
    </location>
</feature>
<feature type="chain" id="PRO_0000053289" description="Myoglobin">
    <location>
        <begin position="2"/>
        <end position="154"/>
    </location>
</feature>
<feature type="domain" description="Globin" evidence="7">
    <location>
        <begin position="2"/>
        <end position="148"/>
    </location>
</feature>
<feature type="binding site" evidence="5">
    <location>
        <position position="65"/>
    </location>
    <ligand>
        <name>nitrite</name>
        <dbReference type="ChEBI" id="CHEBI:16301"/>
    </ligand>
</feature>
<feature type="binding site" evidence="3 7">
    <location>
        <position position="65"/>
    </location>
    <ligand>
        <name>O2</name>
        <dbReference type="ChEBI" id="CHEBI:15379"/>
    </ligand>
</feature>
<feature type="binding site" description="proximal binding residue" evidence="1">
    <location>
        <position position="94"/>
    </location>
    <ligand>
        <name>heme b</name>
        <dbReference type="ChEBI" id="CHEBI:60344"/>
    </ligand>
    <ligandPart>
        <name>Fe</name>
        <dbReference type="ChEBI" id="CHEBI:18248"/>
    </ligandPart>
</feature>
<feature type="modified residue" description="Phosphoserine" evidence="6">
    <location>
        <position position="4"/>
    </location>
</feature>
<feature type="modified residue" description="Phosphothreonine" evidence="4">
    <location>
        <position position="68"/>
    </location>
</feature>
<protein>
    <recommendedName>
        <fullName>Myoglobin</fullName>
    </recommendedName>
    <alternativeName>
        <fullName evidence="1">Nitrite reductase MB</fullName>
        <ecNumber evidence="1">1.7.-.-</ecNumber>
    </alternativeName>
    <alternativeName>
        <fullName evidence="1">Pseudoperoxidase MB</fullName>
        <ecNumber evidence="1">1.11.1.-</ecNumber>
    </alternativeName>
</protein>
<dbReference type="EC" id="1.7.-.-" evidence="1"/>
<dbReference type="EC" id="1.11.1.-" evidence="1"/>
<dbReference type="PIR" id="A02514">
    <property type="entry name" value="MYOP"/>
</dbReference>
<dbReference type="SMR" id="P02193"/>
<dbReference type="GO" id="GO:0070062">
    <property type="term" value="C:extracellular exosome"/>
    <property type="evidence" value="ECO:0007669"/>
    <property type="project" value="TreeGrafter"/>
</dbReference>
<dbReference type="GO" id="GO:0016528">
    <property type="term" value="C:sarcoplasm"/>
    <property type="evidence" value="ECO:0000250"/>
    <property type="project" value="UniProtKB"/>
</dbReference>
<dbReference type="GO" id="GO:0020037">
    <property type="term" value="F:heme binding"/>
    <property type="evidence" value="ECO:0007669"/>
    <property type="project" value="InterPro"/>
</dbReference>
<dbReference type="GO" id="GO:0046872">
    <property type="term" value="F:metal ion binding"/>
    <property type="evidence" value="ECO:0007669"/>
    <property type="project" value="UniProtKB-KW"/>
</dbReference>
<dbReference type="GO" id="GO:0098809">
    <property type="term" value="F:nitrite reductase activity"/>
    <property type="evidence" value="ECO:0000250"/>
    <property type="project" value="UniProtKB"/>
</dbReference>
<dbReference type="GO" id="GO:0019825">
    <property type="term" value="F:oxygen binding"/>
    <property type="evidence" value="ECO:0007669"/>
    <property type="project" value="InterPro"/>
</dbReference>
<dbReference type="GO" id="GO:0005344">
    <property type="term" value="F:oxygen carrier activity"/>
    <property type="evidence" value="ECO:0000250"/>
    <property type="project" value="UniProtKB"/>
</dbReference>
<dbReference type="GO" id="GO:0004601">
    <property type="term" value="F:peroxidase activity"/>
    <property type="evidence" value="ECO:0000250"/>
    <property type="project" value="UniProtKB"/>
</dbReference>
<dbReference type="GO" id="GO:0019430">
    <property type="term" value="P:removal of superoxide radicals"/>
    <property type="evidence" value="ECO:0000250"/>
    <property type="project" value="UniProtKB"/>
</dbReference>
<dbReference type="CDD" id="cd08926">
    <property type="entry name" value="Mb"/>
    <property type="match status" value="1"/>
</dbReference>
<dbReference type="Gene3D" id="6.10.140.2100">
    <property type="match status" value="1"/>
</dbReference>
<dbReference type="Gene3D" id="6.10.140.2110">
    <property type="match status" value="1"/>
</dbReference>
<dbReference type="InterPro" id="IPR000971">
    <property type="entry name" value="Globin"/>
</dbReference>
<dbReference type="InterPro" id="IPR009050">
    <property type="entry name" value="Globin-like_sf"/>
</dbReference>
<dbReference type="InterPro" id="IPR002335">
    <property type="entry name" value="Myoglobin"/>
</dbReference>
<dbReference type="PANTHER" id="PTHR47132">
    <property type="entry name" value="MYOGLOBIN"/>
    <property type="match status" value="1"/>
</dbReference>
<dbReference type="PANTHER" id="PTHR47132:SF1">
    <property type="entry name" value="MYOGLOBIN"/>
    <property type="match status" value="1"/>
</dbReference>
<dbReference type="Pfam" id="PF00042">
    <property type="entry name" value="Globin"/>
    <property type="match status" value="1"/>
</dbReference>
<dbReference type="PRINTS" id="PR00613">
    <property type="entry name" value="MYOGLOBIN"/>
</dbReference>
<dbReference type="SUPFAM" id="SSF46458">
    <property type="entry name" value="Globin-like"/>
    <property type="match status" value="1"/>
</dbReference>
<dbReference type="PROSITE" id="PS01033">
    <property type="entry name" value="GLOBIN"/>
    <property type="match status" value="1"/>
</dbReference>
<gene>
    <name type="primary">MB</name>
</gene>
<reference key="1">
    <citation type="journal article" date="1975" name="Biochim. Biophys. Acta">
        <title>The primary structure of the myoglobin of Didelphis marsupialis (Virginia opossum).</title>
        <authorList>
            <person name="Romero-Herrera A.E."/>
            <person name="Lehmann H."/>
        </authorList>
    </citation>
    <scope>PROTEIN SEQUENCE OF 2-154</scope>
</reference>
<evidence type="ECO:0000250" key="1">
    <source>
        <dbReference type="UniProtKB" id="P02144"/>
    </source>
</evidence>
<evidence type="ECO:0000250" key="2">
    <source>
        <dbReference type="UniProtKB" id="P02185"/>
    </source>
</evidence>
<evidence type="ECO:0000250" key="3">
    <source>
        <dbReference type="UniProtKB" id="P02189"/>
    </source>
</evidence>
<evidence type="ECO:0000250" key="4">
    <source>
        <dbReference type="UniProtKB" id="P04247"/>
    </source>
</evidence>
<evidence type="ECO:0000250" key="5">
    <source>
        <dbReference type="UniProtKB" id="P68082"/>
    </source>
</evidence>
<evidence type="ECO:0000250" key="6">
    <source>
        <dbReference type="UniProtKB" id="Q9QZ76"/>
    </source>
</evidence>
<evidence type="ECO:0000255" key="7">
    <source>
        <dbReference type="PROSITE-ProRule" id="PRU00238"/>
    </source>
</evidence>
<evidence type="ECO:0000269" key="8">
    <source>
    </source>
</evidence>
<proteinExistence type="evidence at protein level"/>
<comment type="function">
    <text evidence="1">Monomeric heme protein which primary function is to store oxygen and facilitate its diffusion within muscle tissues. Reversibly binds oxygen through a pentacoordinated heme iron and enables its timely and efficient release as needed during periods of heightened demand. Depending on the oxidative conditions of tissues and cells, and in addition to its ability to bind oxygen, it also has a nitrite reductase activity whereby it regulates the production of bioactive nitric oxide. Under stress conditions, like hypoxia and anoxia, it also protects cells against reactive oxygen species thanks to its pseudoperoxidase activity.</text>
</comment>
<comment type="catalytic activity">
    <reaction evidence="1">
        <text>Fe(III)-heme b-[protein] + nitric oxide + H2O = Fe(II)-heme b-[protein] + nitrite + 2 H(+)</text>
        <dbReference type="Rhea" id="RHEA:77711"/>
        <dbReference type="Rhea" id="RHEA-COMP:18975"/>
        <dbReference type="Rhea" id="RHEA-COMP:18976"/>
        <dbReference type="ChEBI" id="CHEBI:15377"/>
        <dbReference type="ChEBI" id="CHEBI:15378"/>
        <dbReference type="ChEBI" id="CHEBI:16301"/>
        <dbReference type="ChEBI" id="CHEBI:16480"/>
        <dbReference type="ChEBI" id="CHEBI:55376"/>
        <dbReference type="ChEBI" id="CHEBI:60344"/>
    </reaction>
    <physiologicalReaction direction="right-to-left" evidence="1">
        <dbReference type="Rhea" id="RHEA:77713"/>
    </physiologicalReaction>
</comment>
<comment type="catalytic activity">
    <reaction evidence="1">
        <text>H2O2 + AH2 = A + 2 H2O</text>
        <dbReference type="Rhea" id="RHEA:30275"/>
        <dbReference type="ChEBI" id="CHEBI:13193"/>
        <dbReference type="ChEBI" id="CHEBI:15377"/>
        <dbReference type="ChEBI" id="CHEBI:16240"/>
        <dbReference type="ChEBI" id="CHEBI:17499"/>
    </reaction>
</comment>
<comment type="subunit">
    <text evidence="2">Monomeric.</text>
</comment>
<comment type="subcellular location">
    <subcellularLocation>
        <location evidence="1">Cytoplasm</location>
        <location evidence="1">Sarcoplasm</location>
    </subcellularLocation>
</comment>
<comment type="similarity">
    <text evidence="7">Belongs to the globin family.</text>
</comment>
<name>MYG_DIDVI</name>
<sequence>MGLSDGEWQLVLNAWGKVEADIPGHGQEVLIRLFKGHPETLEKFDKFKHLKSEDEMKASEDLKKHGATVLTALGNILKKKGNHEAELKPLAQSHATKHKISVQFLEFISEAIIQVIQSKHPGDFGGDAQAAMGKALELFRNDMAAKYKELGFQG</sequence>
<accession>P02193</accession>